<dbReference type="EMBL" id="AC004473">
    <property type="protein sequence ID" value="AAC24070.1"/>
    <property type="status" value="ALT_SEQ"/>
    <property type="molecule type" value="Genomic_DNA"/>
</dbReference>
<dbReference type="EMBL" id="CP002684">
    <property type="protein sequence ID" value="AEE33685.1"/>
    <property type="molecule type" value="Genomic_DNA"/>
</dbReference>
<dbReference type="EMBL" id="CP002684">
    <property type="protein sequence ID" value="AEE33686.1"/>
    <property type="molecule type" value="Genomic_DNA"/>
</dbReference>
<dbReference type="EMBL" id="CP002684">
    <property type="protein sequence ID" value="ANM59520.1"/>
    <property type="molecule type" value="Genomic_DNA"/>
</dbReference>
<dbReference type="EMBL" id="BT025737">
    <property type="protein sequence ID" value="ABF83627.1"/>
    <property type="molecule type" value="mRNA"/>
</dbReference>
<dbReference type="EMBL" id="AY084614">
    <property type="protein sequence ID" value="AAM61177.1"/>
    <property type="molecule type" value="mRNA"/>
</dbReference>
<dbReference type="PIR" id="T02293">
    <property type="entry name" value="T02293"/>
</dbReference>
<dbReference type="RefSeq" id="NP_001077743.1">
    <property type="nucleotide sequence ID" value="NM_001084274.2"/>
</dbReference>
<dbReference type="RefSeq" id="NP_001319276.1">
    <property type="nucleotide sequence ID" value="NM_001333892.1"/>
</dbReference>
<dbReference type="RefSeq" id="NP_564757.1">
    <property type="nucleotide sequence ID" value="NM_104730.3"/>
</dbReference>
<dbReference type="SMR" id="Q1ECJ7"/>
<dbReference type="BioGRID" id="27562">
    <property type="interactions" value="8"/>
</dbReference>
<dbReference type="FunCoup" id="Q1ECJ7">
    <property type="interactions" value="3712"/>
</dbReference>
<dbReference type="IntAct" id="Q1ECJ7">
    <property type="interactions" value="8"/>
</dbReference>
<dbReference type="STRING" id="3702.Q1ECJ7"/>
<dbReference type="PaxDb" id="3702-AT1G60430.2"/>
<dbReference type="ProteomicsDB" id="246937"/>
<dbReference type="EnsemblPlants" id="AT1G60430.1">
    <property type="protein sequence ID" value="AT1G60430.1"/>
    <property type="gene ID" value="AT1G60430"/>
</dbReference>
<dbReference type="EnsemblPlants" id="AT1G60430.2">
    <property type="protein sequence ID" value="AT1G60430.2"/>
    <property type="gene ID" value="AT1G60430"/>
</dbReference>
<dbReference type="EnsemblPlants" id="AT1G60430.3">
    <property type="protein sequence ID" value="AT1G60430.3"/>
    <property type="gene ID" value="AT1G60430"/>
</dbReference>
<dbReference type="GeneID" id="842338"/>
<dbReference type="Gramene" id="AT1G60430.1">
    <property type="protein sequence ID" value="AT1G60430.1"/>
    <property type="gene ID" value="AT1G60430"/>
</dbReference>
<dbReference type="Gramene" id="AT1G60430.2">
    <property type="protein sequence ID" value="AT1G60430.2"/>
    <property type="gene ID" value="AT1G60430"/>
</dbReference>
<dbReference type="Gramene" id="AT1G60430.3">
    <property type="protein sequence ID" value="AT1G60430.3"/>
    <property type="gene ID" value="AT1G60430"/>
</dbReference>
<dbReference type="KEGG" id="ath:AT1G60430"/>
<dbReference type="Araport" id="AT1G60430"/>
<dbReference type="TAIR" id="AT1G60430">
    <property type="gene designation" value="ARPC3"/>
</dbReference>
<dbReference type="eggNOG" id="KOG3155">
    <property type="taxonomic scope" value="Eukaryota"/>
</dbReference>
<dbReference type="HOGENOM" id="CLU_094365_0_0_1"/>
<dbReference type="InParanoid" id="Q1ECJ7"/>
<dbReference type="OMA" id="TPSKWWL"/>
<dbReference type="PhylomeDB" id="Q1ECJ7"/>
<dbReference type="PRO" id="PR:Q1ECJ7"/>
<dbReference type="Proteomes" id="UP000006548">
    <property type="component" value="Chromosome 1"/>
</dbReference>
<dbReference type="ExpressionAtlas" id="Q1ECJ7">
    <property type="expression patterns" value="baseline and differential"/>
</dbReference>
<dbReference type="GO" id="GO:0005885">
    <property type="term" value="C:Arp2/3 protein complex"/>
    <property type="evidence" value="ECO:0000304"/>
    <property type="project" value="TAIR"/>
</dbReference>
<dbReference type="GO" id="GO:0042995">
    <property type="term" value="C:cell projection"/>
    <property type="evidence" value="ECO:0007669"/>
    <property type="project" value="UniProtKB-SubCell"/>
</dbReference>
<dbReference type="GO" id="GO:0005737">
    <property type="term" value="C:cytoplasm"/>
    <property type="evidence" value="ECO:0007669"/>
    <property type="project" value="UniProtKB-KW"/>
</dbReference>
<dbReference type="GO" id="GO:0003779">
    <property type="term" value="F:actin binding"/>
    <property type="evidence" value="ECO:0007669"/>
    <property type="project" value="UniProtKB-KW"/>
</dbReference>
<dbReference type="GO" id="GO:0007015">
    <property type="term" value="P:actin filament organization"/>
    <property type="evidence" value="ECO:0000304"/>
    <property type="project" value="TAIR"/>
</dbReference>
<dbReference type="GO" id="GO:0034314">
    <property type="term" value="P:Arp2/3 complex-mediated actin nucleation"/>
    <property type="evidence" value="ECO:0007669"/>
    <property type="project" value="InterPro"/>
</dbReference>
<dbReference type="GO" id="GO:0030833">
    <property type="term" value="P:regulation of actin filament polymerization"/>
    <property type="evidence" value="ECO:0007669"/>
    <property type="project" value="InterPro"/>
</dbReference>
<dbReference type="Gene3D" id="1.10.1760.10">
    <property type="entry name" value="Actin-related protein 2/3 complex subunit 3"/>
    <property type="match status" value="1"/>
</dbReference>
<dbReference type="InterPro" id="IPR007204">
    <property type="entry name" value="ARPC3"/>
</dbReference>
<dbReference type="InterPro" id="IPR036753">
    <property type="entry name" value="ARPC3_sf"/>
</dbReference>
<dbReference type="PANTHER" id="PTHR12391">
    <property type="entry name" value="ARP2/3 COMPLEX 21 KD SUBUNIT"/>
    <property type="match status" value="1"/>
</dbReference>
<dbReference type="Pfam" id="PF04062">
    <property type="entry name" value="P21-Arc"/>
    <property type="match status" value="1"/>
</dbReference>
<dbReference type="PIRSF" id="PIRSF016315">
    <property type="entry name" value="ARP2/3_P21-Arc"/>
    <property type="match status" value="1"/>
</dbReference>
<dbReference type="SUPFAM" id="SSF69060">
    <property type="entry name" value="Arp2/3 complex 21 kDa subunit ARPC3"/>
    <property type="match status" value="1"/>
</dbReference>
<gene>
    <name type="primary">ARPC3</name>
    <name type="ordered locus">At1g60430</name>
    <name type="ORF">T13D8.30</name>
</gene>
<feature type="chain" id="PRO_0000422530" description="Actin-related protein 2/3 complex subunit 3">
    <location>
        <begin position="1"/>
        <end position="174"/>
    </location>
</feature>
<feature type="sequence conflict" description="In Ref. 4; AAM61177." evidence="4" ref="4">
    <original>V</original>
    <variation>I</variation>
    <location>
        <position position="13"/>
    </location>
</feature>
<feature type="sequence conflict" description="In Ref. 4; AAM61177." evidence="4" ref="4">
    <original>V</original>
    <variation>I</variation>
    <location>
        <position position="34"/>
    </location>
</feature>
<protein>
    <recommendedName>
        <fullName>Actin-related protein 2/3 complex subunit 3</fullName>
    </recommendedName>
    <alternativeName>
        <fullName>Actin-related protein C3</fullName>
    </alternativeName>
    <alternativeName>
        <fullName>Arp2/3 complex 21 kDa subunit</fullName>
        <shortName>p21-ARC</shortName>
    </alternativeName>
</protein>
<proteinExistence type="evidence at protein level"/>
<evidence type="ECO:0000250" key="1"/>
<evidence type="ECO:0000269" key="2">
    <source>
    </source>
</evidence>
<evidence type="ECO:0000269" key="3">
    <source>
    </source>
</evidence>
<evidence type="ECO:0000305" key="4"/>
<name>ARPC3_ARATH</name>
<accession>Q1ECJ7</accession>
<accession>O80764</accession>
<accession>Q8LFW2</accession>
<sequence>MVYHSSFVDEEGVTKACGCPLLPLKSHIKGPAPVSEQDKTDIVDEAITFFRANVFFTNFDIKSPADKLLIYLTFYINVALKRLEGCRTLAVGTKAIINLGLEDIPVPGETGFPFPGLFSLPQSQDEAELFRNYLKQVREETSGRLLSVAYRANGTPNKWWLAFAKRKFMNVVVL</sequence>
<keyword id="KW-0009">Actin-binding</keyword>
<keyword id="KW-0966">Cell projection</keyword>
<keyword id="KW-0963">Cytoplasm</keyword>
<keyword id="KW-0206">Cytoskeleton</keyword>
<keyword id="KW-1185">Reference proteome</keyword>
<comment type="function">
    <text evidence="1">Functions as a component of the Arp2/3 complex which is involved in regulation of actin polymerization and together with an activating nucleation-promoting factor (NPF) mediates the formation of branched actin networks. Arp2/3 complex plays a critical role in the control of cell morphogenesis via the modulation of cell polarity development.</text>
</comment>
<comment type="subunit">
    <text evidence="3">Component of the Arp2/3 complex composed of ARP2, ARP3, ARPC1/p41-ARC, ARPC2/p34-ARC, ARPC3/p21-ARC, ARPC4/p20-ARC and ARPC5/p16-ARC. Interacts with SCAR2/DIS3 (WAVE complex).</text>
</comment>
<comment type="interaction">
    <interactant intactId="EBI-1547752">
        <id>Q1ECJ7</id>
    </interactant>
    <interactant intactId="EBI-1547795">
        <id>Q5XPJ9</id>
        <label>SCAR2</label>
    </interactant>
    <organismsDiffer>false</organismsDiffer>
    <experiments>4</experiments>
</comment>
<comment type="subcellular location">
    <subcellularLocation>
        <location evidence="1">Cytoplasm</location>
        <location evidence="1">Cytoskeleton</location>
    </subcellularLocation>
    <subcellularLocation>
        <location evidence="1">Cell projection</location>
    </subcellularLocation>
</comment>
<comment type="tissue specificity">
    <text evidence="2">Expressed at low levels in all tissues with a relatively highest expression in inflorescences.</text>
</comment>
<comment type="similarity">
    <text evidence="4">Belongs to the ARPC3 family.</text>
</comment>
<comment type="sequence caution" evidence="4">
    <conflict type="erroneous gene model prediction">
        <sequence resource="EMBL-CDS" id="AAC24070"/>
    </conflict>
</comment>
<organism>
    <name type="scientific">Arabidopsis thaliana</name>
    <name type="common">Mouse-ear cress</name>
    <dbReference type="NCBI Taxonomy" id="3702"/>
    <lineage>
        <taxon>Eukaryota</taxon>
        <taxon>Viridiplantae</taxon>
        <taxon>Streptophyta</taxon>
        <taxon>Embryophyta</taxon>
        <taxon>Tracheophyta</taxon>
        <taxon>Spermatophyta</taxon>
        <taxon>Magnoliopsida</taxon>
        <taxon>eudicotyledons</taxon>
        <taxon>Gunneridae</taxon>
        <taxon>Pentapetalae</taxon>
        <taxon>rosids</taxon>
        <taxon>malvids</taxon>
        <taxon>Brassicales</taxon>
        <taxon>Brassicaceae</taxon>
        <taxon>Camelineae</taxon>
        <taxon>Arabidopsis</taxon>
    </lineage>
</organism>
<reference key="1">
    <citation type="journal article" date="2000" name="Nature">
        <title>Sequence and analysis of chromosome 1 of the plant Arabidopsis thaliana.</title>
        <authorList>
            <person name="Theologis A."/>
            <person name="Ecker J.R."/>
            <person name="Palm C.J."/>
            <person name="Federspiel N.A."/>
            <person name="Kaul S."/>
            <person name="White O."/>
            <person name="Alonso J."/>
            <person name="Altafi H."/>
            <person name="Araujo R."/>
            <person name="Bowman C.L."/>
            <person name="Brooks S.Y."/>
            <person name="Buehler E."/>
            <person name="Chan A."/>
            <person name="Chao Q."/>
            <person name="Chen H."/>
            <person name="Cheuk R.F."/>
            <person name="Chin C.W."/>
            <person name="Chung M.K."/>
            <person name="Conn L."/>
            <person name="Conway A.B."/>
            <person name="Conway A.R."/>
            <person name="Creasy T.H."/>
            <person name="Dewar K."/>
            <person name="Dunn P."/>
            <person name="Etgu P."/>
            <person name="Feldblyum T.V."/>
            <person name="Feng J.-D."/>
            <person name="Fong B."/>
            <person name="Fujii C.Y."/>
            <person name="Gill J.E."/>
            <person name="Goldsmith A.D."/>
            <person name="Haas B."/>
            <person name="Hansen N.F."/>
            <person name="Hughes B."/>
            <person name="Huizar L."/>
            <person name="Hunter J.L."/>
            <person name="Jenkins J."/>
            <person name="Johnson-Hopson C."/>
            <person name="Khan S."/>
            <person name="Khaykin E."/>
            <person name="Kim C.J."/>
            <person name="Koo H.L."/>
            <person name="Kremenetskaia I."/>
            <person name="Kurtz D.B."/>
            <person name="Kwan A."/>
            <person name="Lam B."/>
            <person name="Langin-Hooper S."/>
            <person name="Lee A."/>
            <person name="Lee J.M."/>
            <person name="Lenz C.A."/>
            <person name="Li J.H."/>
            <person name="Li Y.-P."/>
            <person name="Lin X."/>
            <person name="Liu S.X."/>
            <person name="Liu Z.A."/>
            <person name="Luros J.S."/>
            <person name="Maiti R."/>
            <person name="Marziali A."/>
            <person name="Militscher J."/>
            <person name="Miranda M."/>
            <person name="Nguyen M."/>
            <person name="Nierman W.C."/>
            <person name="Osborne B.I."/>
            <person name="Pai G."/>
            <person name="Peterson J."/>
            <person name="Pham P.K."/>
            <person name="Rizzo M."/>
            <person name="Rooney T."/>
            <person name="Rowley D."/>
            <person name="Sakano H."/>
            <person name="Salzberg S.L."/>
            <person name="Schwartz J.R."/>
            <person name="Shinn P."/>
            <person name="Southwick A.M."/>
            <person name="Sun H."/>
            <person name="Tallon L.J."/>
            <person name="Tambunga G."/>
            <person name="Toriumi M.J."/>
            <person name="Town C.D."/>
            <person name="Utterback T."/>
            <person name="Van Aken S."/>
            <person name="Vaysberg M."/>
            <person name="Vysotskaia V.S."/>
            <person name="Walker M."/>
            <person name="Wu D."/>
            <person name="Yu G."/>
            <person name="Fraser C.M."/>
            <person name="Venter J.C."/>
            <person name="Davis R.W."/>
        </authorList>
    </citation>
    <scope>NUCLEOTIDE SEQUENCE [LARGE SCALE GENOMIC DNA]</scope>
    <source>
        <strain>cv. Columbia</strain>
    </source>
</reference>
<reference key="2">
    <citation type="journal article" date="2017" name="Plant J.">
        <title>Araport11: a complete reannotation of the Arabidopsis thaliana reference genome.</title>
        <authorList>
            <person name="Cheng C.Y."/>
            <person name="Krishnakumar V."/>
            <person name="Chan A.P."/>
            <person name="Thibaud-Nissen F."/>
            <person name="Schobel S."/>
            <person name="Town C.D."/>
        </authorList>
    </citation>
    <scope>GENOME REANNOTATION</scope>
    <source>
        <strain>cv. Columbia</strain>
    </source>
</reference>
<reference key="3">
    <citation type="submission" date="2006-06" db="EMBL/GenBank/DDBJ databases">
        <title>Arabidopsis ORF clones.</title>
        <authorList>
            <person name="Kim C.J."/>
            <person name="Chen H."/>
            <person name="Quinitio C."/>
            <person name="Shinn P."/>
            <person name="Ecker J.R."/>
        </authorList>
    </citation>
    <scope>NUCLEOTIDE SEQUENCE [LARGE SCALE MRNA]</scope>
    <source>
        <strain>cv. Columbia</strain>
    </source>
</reference>
<reference key="4">
    <citation type="submission" date="2002-03" db="EMBL/GenBank/DDBJ databases">
        <title>Full-length cDNA from Arabidopsis thaliana.</title>
        <authorList>
            <person name="Brover V.V."/>
            <person name="Troukhan M.E."/>
            <person name="Alexandrov N.A."/>
            <person name="Lu Y.-P."/>
            <person name="Flavell R.B."/>
            <person name="Feldmann K.A."/>
        </authorList>
    </citation>
    <scope>NUCLEOTIDE SEQUENCE [LARGE SCALE MRNA]</scope>
</reference>
<reference key="5">
    <citation type="journal article" date="2003" name="Plant Physiol.">
        <title>The putative Arabidopsis arp2/3 complex controls leaf cell morphogenesis.</title>
        <authorList>
            <person name="Li S."/>
            <person name="Blanchoin L."/>
            <person name="Yang Z."/>
            <person name="Lord E.M."/>
        </authorList>
    </citation>
    <scope>TISSUE SPECIFICITY</scope>
    <scope>IDENTIFICATION OF THE ARP2/3 COMPLEX</scope>
</reference>
<reference key="6">
    <citation type="journal article" date="2005" name="Curr. Opin. Plant Biol.">
        <title>Breaking the WAVE complex: the point of Arabidopsis trichomes.</title>
        <authorList>
            <person name="Szymanski D.B."/>
        </authorList>
    </citation>
    <scope>REVIEW</scope>
</reference>
<reference key="7">
    <citation type="journal article" date="2005" name="Plant Cell">
        <title>DISTORTED3/SCAR2 is a putative Arabidopsis WAVE complex subunit that activates the Arp2/3 complex and is required for epidermal morphogenesis.</title>
        <authorList>
            <person name="Basu D."/>
            <person name="Le J."/>
            <person name="El-Din El-Assal S."/>
            <person name="Huang S."/>
            <person name="Zhang C."/>
            <person name="Mallery E.L."/>
            <person name="Koliantz G."/>
            <person name="Staiger C.J."/>
            <person name="Szymanski D.B."/>
        </authorList>
    </citation>
    <scope>INTERACTION WITH SCAR2/DIS3</scope>
</reference>